<name>ADA2A_DANRE</name>
<organism>
    <name type="scientific">Danio rerio</name>
    <name type="common">Zebrafish</name>
    <name type="synonym">Brachydanio rerio</name>
    <dbReference type="NCBI Taxonomy" id="7955"/>
    <lineage>
        <taxon>Eukaryota</taxon>
        <taxon>Metazoa</taxon>
        <taxon>Chordata</taxon>
        <taxon>Craniata</taxon>
        <taxon>Vertebrata</taxon>
        <taxon>Euteleostomi</taxon>
        <taxon>Actinopterygii</taxon>
        <taxon>Neopterygii</taxon>
        <taxon>Teleostei</taxon>
        <taxon>Ostariophysi</taxon>
        <taxon>Cypriniformes</taxon>
        <taxon>Danionidae</taxon>
        <taxon>Danioninae</taxon>
        <taxon>Danio</taxon>
    </lineage>
</organism>
<dbReference type="EMBL" id="AY048971">
    <property type="protein sequence ID" value="AAL07510.1"/>
    <property type="molecule type" value="Genomic_DNA"/>
</dbReference>
<dbReference type="SMR" id="Q90WY4"/>
<dbReference type="FunCoup" id="Q90WY4">
    <property type="interactions" value="528"/>
</dbReference>
<dbReference type="STRING" id="7955.ENSDARP00000059868"/>
<dbReference type="GlyCosmos" id="Q90WY4">
    <property type="glycosylation" value="3 sites, No reported glycans"/>
</dbReference>
<dbReference type="PaxDb" id="7955-ENSDARP00000059868"/>
<dbReference type="AGR" id="ZFIN:ZDB-GENE-021010-1"/>
<dbReference type="ZFIN" id="ZDB-GENE-021010-1">
    <property type="gene designation" value="adra2a"/>
</dbReference>
<dbReference type="eggNOG" id="KOG3656">
    <property type="taxonomic scope" value="Eukaryota"/>
</dbReference>
<dbReference type="InParanoid" id="Q90WY4"/>
<dbReference type="PhylomeDB" id="Q90WY4"/>
<dbReference type="Reactome" id="R-DRE-390696">
    <property type="pathway name" value="Adrenoceptors"/>
</dbReference>
<dbReference type="Reactome" id="R-DRE-392023">
    <property type="pathway name" value="Adrenaline signalling through Alpha-2 adrenergic receptor"/>
</dbReference>
<dbReference type="Reactome" id="R-DRE-400042">
    <property type="pathway name" value="Adrenaline,noradrenaline inhibits insulin secretion"/>
</dbReference>
<dbReference type="Reactome" id="R-DRE-418594">
    <property type="pathway name" value="G alpha (i) signalling events"/>
</dbReference>
<dbReference type="PRO" id="PR:Q90WY4"/>
<dbReference type="Proteomes" id="UP000000437">
    <property type="component" value="Unplaced"/>
</dbReference>
<dbReference type="GO" id="GO:0005886">
    <property type="term" value="C:plasma membrane"/>
    <property type="evidence" value="ECO:0000250"/>
    <property type="project" value="ZFIN"/>
</dbReference>
<dbReference type="GO" id="GO:0004938">
    <property type="term" value="F:alpha2-adrenergic receptor activity"/>
    <property type="evidence" value="ECO:0000314"/>
    <property type="project" value="UniProtKB"/>
</dbReference>
<dbReference type="GO" id="GO:0051379">
    <property type="term" value="F:epinephrine binding"/>
    <property type="evidence" value="ECO:0000318"/>
    <property type="project" value="GO_Central"/>
</dbReference>
<dbReference type="GO" id="GO:0071881">
    <property type="term" value="P:adenylate cyclase-inhibiting adrenergic receptor signaling pathway"/>
    <property type="evidence" value="ECO:0000314"/>
    <property type="project" value="UniProtKB"/>
</dbReference>
<dbReference type="GO" id="GO:0007186">
    <property type="term" value="P:G protein-coupled receptor signaling pathway"/>
    <property type="evidence" value="ECO:0000250"/>
    <property type="project" value="ZFIN"/>
</dbReference>
<dbReference type="CDD" id="cd15322">
    <property type="entry name" value="7tmA_alpha2A_AR"/>
    <property type="match status" value="1"/>
</dbReference>
<dbReference type="Gene3D" id="1.20.1070.10">
    <property type="entry name" value="Rhodopsin 7-helix transmembrane proteins"/>
    <property type="match status" value="1"/>
</dbReference>
<dbReference type="InterPro" id="IPR002233">
    <property type="entry name" value="ADR_fam"/>
</dbReference>
<dbReference type="InterPro" id="IPR000276">
    <property type="entry name" value="GPCR_Rhodpsn"/>
</dbReference>
<dbReference type="InterPro" id="IPR017452">
    <property type="entry name" value="GPCR_Rhodpsn_7TM"/>
</dbReference>
<dbReference type="PANTHER" id="PTHR24248">
    <property type="entry name" value="ADRENERGIC RECEPTOR-RELATED G-PROTEIN COUPLED RECEPTOR"/>
    <property type="match status" value="1"/>
</dbReference>
<dbReference type="PANTHER" id="PTHR24248:SF24">
    <property type="entry name" value="ALPHA-2A ADRENERGIC RECEPTOR"/>
    <property type="match status" value="1"/>
</dbReference>
<dbReference type="Pfam" id="PF00001">
    <property type="entry name" value="7tm_1"/>
    <property type="match status" value="1"/>
</dbReference>
<dbReference type="PRINTS" id="PR01103">
    <property type="entry name" value="ADRENERGICR"/>
</dbReference>
<dbReference type="PRINTS" id="PR00237">
    <property type="entry name" value="GPCRRHODOPSN"/>
</dbReference>
<dbReference type="SMART" id="SM01381">
    <property type="entry name" value="7TM_GPCR_Srsx"/>
    <property type="match status" value="1"/>
</dbReference>
<dbReference type="SUPFAM" id="SSF81321">
    <property type="entry name" value="Family A G protein-coupled receptor-like"/>
    <property type="match status" value="1"/>
</dbReference>
<dbReference type="PROSITE" id="PS00237">
    <property type="entry name" value="G_PROTEIN_RECEP_F1_1"/>
    <property type="match status" value="1"/>
</dbReference>
<dbReference type="PROSITE" id="PS50262">
    <property type="entry name" value="G_PROTEIN_RECEP_F1_2"/>
    <property type="match status" value="1"/>
</dbReference>
<protein>
    <recommendedName>
        <fullName evidence="2">Alpha-2A adrenergic receptor</fullName>
    </recommendedName>
    <alternativeName>
        <fullName>Alpha-2A adrenoreceptor</fullName>
        <shortName>Alpha-2A adrenoceptor</shortName>
        <shortName>Alpha-2AAR</shortName>
    </alternativeName>
</protein>
<evidence type="ECO:0000250" key="1"/>
<evidence type="ECO:0000250" key="2">
    <source>
        <dbReference type="UniProtKB" id="P08913"/>
    </source>
</evidence>
<evidence type="ECO:0000255" key="3"/>
<evidence type="ECO:0000255" key="4">
    <source>
        <dbReference type="PROSITE-ProRule" id="PRU00521"/>
    </source>
</evidence>
<evidence type="ECO:0000256" key="5">
    <source>
        <dbReference type="SAM" id="MobiDB-lite"/>
    </source>
</evidence>
<evidence type="ECO:0000269" key="6">
    <source>
    </source>
</evidence>
<keyword id="KW-1003">Cell membrane</keyword>
<keyword id="KW-1015">Disulfide bond</keyword>
<keyword id="KW-0297">G-protein coupled receptor</keyword>
<keyword id="KW-0325">Glycoprotein</keyword>
<keyword id="KW-0449">Lipoprotein</keyword>
<keyword id="KW-0472">Membrane</keyword>
<keyword id="KW-0564">Palmitate</keyword>
<keyword id="KW-0675">Receptor</keyword>
<keyword id="KW-1185">Reference proteome</keyword>
<keyword id="KW-0807">Transducer</keyword>
<keyword id="KW-0812">Transmembrane</keyword>
<keyword id="KW-1133">Transmembrane helix</keyword>
<feature type="chain" id="PRO_0000069084" description="Alpha-2A adrenergic receptor">
    <location>
        <begin position="1"/>
        <end position="388"/>
    </location>
</feature>
<feature type="topological domain" description="Extracellular" evidence="1">
    <location>
        <begin position="1"/>
        <end position="22"/>
    </location>
</feature>
<feature type="transmembrane region" description="Helical; Name=1" evidence="1">
    <location>
        <begin position="23"/>
        <end position="48"/>
    </location>
</feature>
<feature type="topological domain" description="Cytoplasmic" evidence="1">
    <location>
        <begin position="49"/>
        <end position="59"/>
    </location>
</feature>
<feature type="transmembrane region" description="Helical; Name=2" evidence="1">
    <location>
        <begin position="60"/>
        <end position="85"/>
    </location>
</feature>
<feature type="topological domain" description="Extracellular" evidence="1">
    <location>
        <begin position="86"/>
        <end position="95"/>
    </location>
</feature>
<feature type="transmembrane region" description="Helical; Name=3" evidence="1">
    <location>
        <begin position="96"/>
        <end position="118"/>
    </location>
</feature>
<feature type="topological domain" description="Cytoplasmic" evidence="1">
    <location>
        <begin position="119"/>
        <end position="138"/>
    </location>
</feature>
<feature type="transmembrane region" description="Helical; Name=4" evidence="1">
    <location>
        <begin position="139"/>
        <end position="162"/>
    </location>
</feature>
<feature type="topological domain" description="Extracellular" evidence="1">
    <location>
        <begin position="163"/>
        <end position="173"/>
    </location>
</feature>
<feature type="transmembrane region" description="Helical; Name=5" evidence="1">
    <location>
        <begin position="174"/>
        <end position="198"/>
    </location>
</feature>
<feature type="topological domain" description="Cytoplasmic" evidence="1">
    <location>
        <begin position="199"/>
        <end position="311"/>
    </location>
</feature>
<feature type="transmembrane region" description="Helical; Name=6" evidence="1">
    <location>
        <begin position="312"/>
        <end position="337"/>
    </location>
</feature>
<feature type="topological domain" description="Extracellular" evidence="1">
    <location>
        <begin position="338"/>
        <end position="344"/>
    </location>
</feature>
<feature type="transmembrane region" description="Helical; Name=7" evidence="1">
    <location>
        <begin position="345"/>
        <end position="368"/>
    </location>
</feature>
<feature type="topological domain" description="Cytoplasmic" evidence="1">
    <location>
        <begin position="369"/>
        <end position="388"/>
    </location>
</feature>
<feature type="region of interest" description="Disordered" evidence="5">
    <location>
        <begin position="208"/>
        <end position="291"/>
    </location>
</feature>
<feature type="compositionally biased region" description="Basic and acidic residues" evidence="5">
    <location>
        <begin position="212"/>
        <end position="231"/>
    </location>
</feature>
<feature type="compositionally biased region" description="Basic residues" evidence="5">
    <location>
        <begin position="266"/>
        <end position="275"/>
    </location>
</feature>
<feature type="site" description="Implicated in ligand binding" evidence="1">
    <location>
        <position position="102"/>
    </location>
</feature>
<feature type="site" description="Implicated in catechol agonist binding and receptor activation" evidence="1">
    <location>
        <position position="181"/>
    </location>
</feature>
<feature type="site" description="Implicated in catechol agonist binding and receptor activation" evidence="1">
    <location>
        <position position="185"/>
    </location>
</feature>
<feature type="lipid moiety-binding region" description="S-palmitoyl cysteine" evidence="1">
    <location>
        <position position="380"/>
    </location>
</feature>
<feature type="glycosylation site" description="N-linked (GlcNAc...) asparagine" evidence="3">
    <location>
        <position position="6"/>
    </location>
</feature>
<feature type="glycosylation site" description="N-linked (GlcNAc...) asparagine" evidence="3">
    <location>
        <position position="9"/>
    </location>
</feature>
<feature type="glycosylation site" description="N-linked (GlcNAc...) asparagine" evidence="3">
    <location>
        <position position="12"/>
    </location>
</feature>
<feature type="disulfide bond" evidence="4">
    <location>
        <begin position="95"/>
        <end position="169"/>
    </location>
</feature>
<proteinExistence type="inferred from homology"/>
<reference key="1">
    <citation type="journal article" date="2004" name="Mol. Biol. Evol.">
        <title>Identification of duplicated fourth alpha2-adrenergic receptor subtype by cloning and mapping of five receptor genes in zebrafish.</title>
        <authorList>
            <person name="Ruuskanen J.O."/>
            <person name="Xhaard H."/>
            <person name="Marjamaki A."/>
            <person name="Salaneck E."/>
            <person name="Salminen T."/>
            <person name="Yan Y.-L."/>
            <person name="Postlethwait J.H."/>
            <person name="Johnson M.S."/>
            <person name="Larhammar D."/>
            <person name="Scheinin M."/>
        </authorList>
    </citation>
    <scope>NUCLEOTIDE SEQUENCE [GENOMIC DNA]</scope>
</reference>
<reference key="2">
    <citation type="journal article" date="2005" name="Br. J. Pharmacol.">
        <title>Conserved structural, pharmacological and functional properties among the three human and five zebrafish alpha2-adrenoceptors.</title>
        <authorList>
            <person name="Ruuskanen J.O."/>
            <person name="Laurila J."/>
            <person name="Xhaard H."/>
            <person name="Rantanen V.-V."/>
            <person name="Vuoriluoto K."/>
            <person name="Wurster S."/>
            <person name="Marjamaki A."/>
            <person name="Vainio M."/>
            <person name="Johnson M.S."/>
            <person name="Scheinin M."/>
        </authorList>
    </citation>
    <scope>FUNCTION</scope>
    <scope>3D-STRUCTURE MODELING</scope>
</reference>
<comment type="function">
    <text evidence="6">Alpha-2 adrenergic receptors mediate the catecholamine-induced inhibition of adenylate cyclase through the action of G proteins. The order of potency for this receptor is dexmedetomidine &gt; oxymetazoline = epinephrine &gt; norepinephrine.</text>
</comment>
<comment type="subcellular location">
    <subcellularLocation>
        <location>Cell membrane</location>
        <topology>Multi-pass membrane protein</topology>
    </subcellularLocation>
</comment>
<comment type="similarity">
    <text evidence="4">Belongs to the G-protein coupled receptor 1 family. Adrenergic receptor subfamily. ADRA2A sub-subfamily.</text>
</comment>
<sequence length="388" mass="43997">MICGANATNGTNATKEYTLLVALPLSIAVGLLILLIIFGNVLVIIAVFTSRALRAPQNLFLVSLASADILVATLVMPFSLANELMGMWTFGGVWCEIYLALDVLFCTASITHLCAISLDRYWSITQAIEYNLKRTPQRIKRIIFIVWIIAAVISCPPLITMKKSEGDICDINKEKWYIVSSCIGSFFLPCIIMVLVYIRIYQIAKKRTRAPPGDHRKNEVGKKENDPHEKLNGIQNAEPDDKDEINGVDMEESSSSDHKVSNPCSLKKKSSKGKTKLSQIKPGDGDKTEACQTTKASRWKGRQNREKRFTFVLAVVIGVFVICWFPFFFTYTFTAFCDCCVPETLFKFFFWFGYCNSSLNPIIYTIFNNDFRRSFKKILCRRDKRRVV</sequence>
<accession>Q90WY4</accession>
<gene>
    <name evidence="2" type="primary">adra2a</name>
</gene>